<reference key="1">
    <citation type="journal article" date="2006" name="Genome Res.">
        <title>Skewed genomic variability in strains of the toxigenic bacterial pathogen, Clostridium perfringens.</title>
        <authorList>
            <person name="Myers G.S.A."/>
            <person name="Rasko D.A."/>
            <person name="Cheung J.K."/>
            <person name="Ravel J."/>
            <person name="Seshadri R."/>
            <person name="DeBoy R.T."/>
            <person name="Ren Q."/>
            <person name="Varga J."/>
            <person name="Awad M.M."/>
            <person name="Brinkac L.M."/>
            <person name="Daugherty S.C."/>
            <person name="Haft D.H."/>
            <person name="Dodson R.J."/>
            <person name="Madupu R."/>
            <person name="Nelson W.C."/>
            <person name="Rosovitz M.J."/>
            <person name="Sullivan S.A."/>
            <person name="Khouri H."/>
            <person name="Dimitrov G.I."/>
            <person name="Watkins K.L."/>
            <person name="Mulligan S."/>
            <person name="Benton J."/>
            <person name="Radune D."/>
            <person name="Fisher D.J."/>
            <person name="Atkins H.S."/>
            <person name="Hiscox T."/>
            <person name="Jost B.H."/>
            <person name="Billington S.J."/>
            <person name="Songer J.G."/>
            <person name="McClane B.A."/>
            <person name="Titball R.W."/>
            <person name="Rood J.I."/>
            <person name="Melville S.B."/>
            <person name="Paulsen I.T."/>
        </authorList>
    </citation>
    <scope>NUCLEOTIDE SEQUENCE [LARGE SCALE GENOMIC DNA]</scope>
    <source>
        <strain>ATCC 13124 / DSM 756 / JCM 1290 / NCIMB 6125 / NCTC 8237 / S 107 / Type A</strain>
    </source>
</reference>
<feature type="chain" id="PRO_0000385851" description="GTPase Obg">
    <location>
        <begin position="1"/>
        <end position="428"/>
    </location>
</feature>
<feature type="domain" description="Obg" evidence="3">
    <location>
        <begin position="1"/>
        <end position="158"/>
    </location>
</feature>
<feature type="domain" description="OBG-type G" evidence="1">
    <location>
        <begin position="159"/>
        <end position="331"/>
    </location>
</feature>
<feature type="domain" description="OCT" evidence="2">
    <location>
        <begin position="345"/>
        <end position="428"/>
    </location>
</feature>
<feature type="binding site" evidence="1">
    <location>
        <begin position="165"/>
        <end position="172"/>
    </location>
    <ligand>
        <name>GTP</name>
        <dbReference type="ChEBI" id="CHEBI:37565"/>
    </ligand>
</feature>
<feature type="binding site" evidence="1">
    <location>
        <position position="172"/>
    </location>
    <ligand>
        <name>Mg(2+)</name>
        <dbReference type="ChEBI" id="CHEBI:18420"/>
    </ligand>
</feature>
<feature type="binding site" evidence="1">
    <location>
        <begin position="190"/>
        <end position="194"/>
    </location>
    <ligand>
        <name>GTP</name>
        <dbReference type="ChEBI" id="CHEBI:37565"/>
    </ligand>
</feature>
<feature type="binding site" evidence="1">
    <location>
        <position position="192"/>
    </location>
    <ligand>
        <name>Mg(2+)</name>
        <dbReference type="ChEBI" id="CHEBI:18420"/>
    </ligand>
</feature>
<feature type="binding site" evidence="1">
    <location>
        <begin position="212"/>
        <end position="215"/>
    </location>
    <ligand>
        <name>GTP</name>
        <dbReference type="ChEBI" id="CHEBI:37565"/>
    </ligand>
</feature>
<feature type="binding site" evidence="1">
    <location>
        <begin position="282"/>
        <end position="285"/>
    </location>
    <ligand>
        <name>GTP</name>
        <dbReference type="ChEBI" id="CHEBI:37565"/>
    </ligand>
</feature>
<feature type="binding site" evidence="1">
    <location>
        <begin position="312"/>
        <end position="314"/>
    </location>
    <ligand>
        <name>GTP</name>
        <dbReference type="ChEBI" id="CHEBI:37565"/>
    </ligand>
</feature>
<organism>
    <name type="scientific">Clostridium perfringens (strain ATCC 13124 / DSM 756 / JCM 1290 / NCIMB 6125 / NCTC 8237 / Type A)</name>
    <dbReference type="NCBI Taxonomy" id="195103"/>
    <lineage>
        <taxon>Bacteria</taxon>
        <taxon>Bacillati</taxon>
        <taxon>Bacillota</taxon>
        <taxon>Clostridia</taxon>
        <taxon>Eubacteriales</taxon>
        <taxon>Clostridiaceae</taxon>
        <taxon>Clostridium</taxon>
    </lineage>
</organism>
<sequence>MFIDTAKIFVKSGDGGHGSVSFRREKYVPLGGPDGGDGGKGGDVTFVVDPGMTTLLDFKYKRKFVAGRGQDGQGSKCYGRDGENLTIKVPMGTIIRDVETNKVMADLSHRDDTYTICRGGKGGKGNCKFCTPTRQAPTFAEPGMPGEERWVALELKLLADVGLLGFPNVGKSTLLSVVTKAKPKIANYHFTTLKPNLGVVAVPGIEPFVMADVPGIIEGASEGVGLGLDFLRHIERTRLLIHVVDISGVEGRDAVEDFKRINEELKNYSVKLWDRPQIVVANKCDMLFDEEIFENFKAEVNKMGFDKVFKMSAATSQGVEEVIKEAARMLKDIPVTDLEIPEDERFIPEDKKFTYTINPIEEDGLKVYVVEGSFVDRLLLAVNVNDPDSLRYFHKVLNNKGIFHELREMGIEDGDMVRLNDFEFEYLL</sequence>
<dbReference type="EC" id="3.6.5.-" evidence="1"/>
<dbReference type="EMBL" id="CP000246">
    <property type="protein sequence ID" value="ABG83048.1"/>
    <property type="molecule type" value="Genomic_DNA"/>
</dbReference>
<dbReference type="SMR" id="Q0TNI5"/>
<dbReference type="STRING" id="195103.CPF_2382"/>
<dbReference type="PaxDb" id="195103-CPF_2382"/>
<dbReference type="KEGG" id="cpf:CPF_2382"/>
<dbReference type="eggNOG" id="COG0536">
    <property type="taxonomic scope" value="Bacteria"/>
</dbReference>
<dbReference type="HOGENOM" id="CLU_011747_2_1_9"/>
<dbReference type="Proteomes" id="UP000001823">
    <property type="component" value="Chromosome"/>
</dbReference>
<dbReference type="GO" id="GO:0005737">
    <property type="term" value="C:cytoplasm"/>
    <property type="evidence" value="ECO:0007669"/>
    <property type="project" value="UniProtKB-SubCell"/>
</dbReference>
<dbReference type="GO" id="GO:0005525">
    <property type="term" value="F:GTP binding"/>
    <property type="evidence" value="ECO:0007669"/>
    <property type="project" value="UniProtKB-UniRule"/>
</dbReference>
<dbReference type="GO" id="GO:0003924">
    <property type="term" value="F:GTPase activity"/>
    <property type="evidence" value="ECO:0007669"/>
    <property type="project" value="UniProtKB-UniRule"/>
</dbReference>
<dbReference type="GO" id="GO:0000287">
    <property type="term" value="F:magnesium ion binding"/>
    <property type="evidence" value="ECO:0007669"/>
    <property type="project" value="InterPro"/>
</dbReference>
<dbReference type="GO" id="GO:0042254">
    <property type="term" value="P:ribosome biogenesis"/>
    <property type="evidence" value="ECO:0007669"/>
    <property type="project" value="UniProtKB-UniRule"/>
</dbReference>
<dbReference type="CDD" id="cd01898">
    <property type="entry name" value="Obg"/>
    <property type="match status" value="1"/>
</dbReference>
<dbReference type="FunFam" id="2.70.210.12:FF:000001">
    <property type="entry name" value="GTPase Obg"/>
    <property type="match status" value="1"/>
</dbReference>
<dbReference type="Gene3D" id="3.30.300.350">
    <property type="entry name" value="GTP-binding protein OBG, C-terminal domain"/>
    <property type="match status" value="1"/>
</dbReference>
<dbReference type="Gene3D" id="2.70.210.12">
    <property type="entry name" value="GTP1/OBG domain"/>
    <property type="match status" value="1"/>
</dbReference>
<dbReference type="Gene3D" id="3.40.50.300">
    <property type="entry name" value="P-loop containing nucleotide triphosphate hydrolases"/>
    <property type="match status" value="1"/>
</dbReference>
<dbReference type="HAMAP" id="MF_01454">
    <property type="entry name" value="GTPase_Obg"/>
    <property type="match status" value="1"/>
</dbReference>
<dbReference type="InterPro" id="IPR031167">
    <property type="entry name" value="G_OBG"/>
</dbReference>
<dbReference type="InterPro" id="IPR006073">
    <property type="entry name" value="GTP-bd"/>
</dbReference>
<dbReference type="InterPro" id="IPR014100">
    <property type="entry name" value="GTP-bd_Obg/CgtA"/>
</dbReference>
<dbReference type="InterPro" id="IPR036346">
    <property type="entry name" value="GTP-bd_prot_GTP1/OBG_C_sf"/>
</dbReference>
<dbReference type="InterPro" id="IPR006074">
    <property type="entry name" value="GTP1-OBG_CS"/>
</dbReference>
<dbReference type="InterPro" id="IPR006169">
    <property type="entry name" value="GTP1_OBG_dom"/>
</dbReference>
<dbReference type="InterPro" id="IPR036726">
    <property type="entry name" value="GTP1_OBG_dom_sf"/>
</dbReference>
<dbReference type="InterPro" id="IPR045086">
    <property type="entry name" value="OBG_GTPase"/>
</dbReference>
<dbReference type="InterPro" id="IPR015349">
    <property type="entry name" value="OCT_dom"/>
</dbReference>
<dbReference type="InterPro" id="IPR027417">
    <property type="entry name" value="P-loop_NTPase"/>
</dbReference>
<dbReference type="InterPro" id="IPR005225">
    <property type="entry name" value="Small_GTP-bd"/>
</dbReference>
<dbReference type="NCBIfam" id="TIGR02729">
    <property type="entry name" value="Obg_CgtA"/>
    <property type="match status" value="1"/>
</dbReference>
<dbReference type="NCBIfam" id="TIGR03595">
    <property type="entry name" value="Obg_CgtA_exten"/>
    <property type="match status" value="1"/>
</dbReference>
<dbReference type="NCBIfam" id="NF008954">
    <property type="entry name" value="PRK12296.1"/>
    <property type="match status" value="1"/>
</dbReference>
<dbReference type="NCBIfam" id="NF008955">
    <property type="entry name" value="PRK12297.1"/>
    <property type="match status" value="1"/>
</dbReference>
<dbReference type="NCBIfam" id="NF008956">
    <property type="entry name" value="PRK12299.1"/>
    <property type="match status" value="1"/>
</dbReference>
<dbReference type="NCBIfam" id="TIGR00231">
    <property type="entry name" value="small_GTP"/>
    <property type="match status" value="1"/>
</dbReference>
<dbReference type="PANTHER" id="PTHR11702">
    <property type="entry name" value="DEVELOPMENTALLY REGULATED GTP-BINDING PROTEIN-RELATED"/>
    <property type="match status" value="1"/>
</dbReference>
<dbReference type="PANTHER" id="PTHR11702:SF31">
    <property type="entry name" value="MITOCHONDRIAL RIBOSOME-ASSOCIATED GTPASE 2"/>
    <property type="match status" value="1"/>
</dbReference>
<dbReference type="Pfam" id="PF09269">
    <property type="entry name" value="DUF1967"/>
    <property type="match status" value="1"/>
</dbReference>
<dbReference type="Pfam" id="PF01018">
    <property type="entry name" value="GTP1_OBG"/>
    <property type="match status" value="1"/>
</dbReference>
<dbReference type="Pfam" id="PF01926">
    <property type="entry name" value="MMR_HSR1"/>
    <property type="match status" value="1"/>
</dbReference>
<dbReference type="PRINTS" id="PR00326">
    <property type="entry name" value="GTP1OBG"/>
</dbReference>
<dbReference type="SUPFAM" id="SSF102741">
    <property type="entry name" value="Obg GTP-binding protein C-terminal domain"/>
    <property type="match status" value="1"/>
</dbReference>
<dbReference type="SUPFAM" id="SSF82051">
    <property type="entry name" value="Obg GTP-binding protein N-terminal domain"/>
    <property type="match status" value="1"/>
</dbReference>
<dbReference type="SUPFAM" id="SSF52540">
    <property type="entry name" value="P-loop containing nucleoside triphosphate hydrolases"/>
    <property type="match status" value="1"/>
</dbReference>
<dbReference type="PROSITE" id="PS51710">
    <property type="entry name" value="G_OBG"/>
    <property type="match status" value="1"/>
</dbReference>
<dbReference type="PROSITE" id="PS00905">
    <property type="entry name" value="GTP1_OBG"/>
    <property type="match status" value="1"/>
</dbReference>
<dbReference type="PROSITE" id="PS51883">
    <property type="entry name" value="OBG"/>
    <property type="match status" value="1"/>
</dbReference>
<dbReference type="PROSITE" id="PS51881">
    <property type="entry name" value="OCT"/>
    <property type="match status" value="1"/>
</dbReference>
<accession>Q0TNI5</accession>
<keyword id="KW-0963">Cytoplasm</keyword>
<keyword id="KW-0342">GTP-binding</keyword>
<keyword id="KW-0378">Hydrolase</keyword>
<keyword id="KW-0460">Magnesium</keyword>
<keyword id="KW-0479">Metal-binding</keyword>
<keyword id="KW-0547">Nucleotide-binding</keyword>
<evidence type="ECO:0000255" key="1">
    <source>
        <dbReference type="HAMAP-Rule" id="MF_01454"/>
    </source>
</evidence>
<evidence type="ECO:0000255" key="2">
    <source>
        <dbReference type="PROSITE-ProRule" id="PRU01229"/>
    </source>
</evidence>
<evidence type="ECO:0000255" key="3">
    <source>
        <dbReference type="PROSITE-ProRule" id="PRU01231"/>
    </source>
</evidence>
<comment type="function">
    <text evidence="1">An essential GTPase which binds GTP, GDP and possibly (p)ppGpp with moderate affinity, with high nucleotide exchange rates and a fairly low GTP hydrolysis rate. Plays a role in control of the cell cycle, stress response, ribosome biogenesis and in those bacteria that undergo differentiation, in morphogenesis control.</text>
</comment>
<comment type="cofactor">
    <cofactor evidence="1">
        <name>Mg(2+)</name>
        <dbReference type="ChEBI" id="CHEBI:18420"/>
    </cofactor>
</comment>
<comment type="subunit">
    <text evidence="1">Monomer.</text>
</comment>
<comment type="subcellular location">
    <subcellularLocation>
        <location evidence="1">Cytoplasm</location>
    </subcellularLocation>
</comment>
<comment type="similarity">
    <text evidence="1">Belongs to the TRAFAC class OBG-HflX-like GTPase superfamily. OBG GTPase family.</text>
</comment>
<gene>
    <name evidence="1" type="primary">obg</name>
    <name type="ordered locus">CPF_2382</name>
</gene>
<protein>
    <recommendedName>
        <fullName evidence="1">GTPase Obg</fullName>
        <ecNumber evidence="1">3.6.5.-</ecNumber>
    </recommendedName>
    <alternativeName>
        <fullName evidence="1">GTP-binding protein Obg</fullName>
    </alternativeName>
</protein>
<name>OBG_CLOP1</name>
<proteinExistence type="inferred from homology"/>